<organism>
    <name type="scientific">Neisseria meningitidis serogroup B (strain ATCC BAA-335 / MC58)</name>
    <dbReference type="NCBI Taxonomy" id="122586"/>
    <lineage>
        <taxon>Bacteria</taxon>
        <taxon>Pseudomonadati</taxon>
        <taxon>Pseudomonadota</taxon>
        <taxon>Betaproteobacteria</taxon>
        <taxon>Neisseriales</taxon>
        <taxon>Neisseriaceae</taxon>
        <taxon>Neisseria</taxon>
    </lineage>
</organism>
<accession>Q9K1A2</accession>
<dbReference type="EMBL" id="AE002098">
    <property type="protein sequence ID" value="AAF40719.1"/>
    <property type="molecule type" value="Genomic_DNA"/>
</dbReference>
<dbReference type="PIR" id="B81218">
    <property type="entry name" value="B81218"/>
</dbReference>
<dbReference type="RefSeq" id="NP_273321.1">
    <property type="nucleotide sequence ID" value="NC_003112.2"/>
</dbReference>
<dbReference type="RefSeq" id="WP_002223336.1">
    <property type="nucleotide sequence ID" value="NC_003112.2"/>
</dbReference>
<dbReference type="SMR" id="Q9K1A2"/>
<dbReference type="FunCoup" id="Q9K1A2">
    <property type="interactions" value="219"/>
</dbReference>
<dbReference type="STRING" id="122586.NMB0265"/>
<dbReference type="PaxDb" id="122586-NMB0265"/>
<dbReference type="KEGG" id="nme:NMB0265"/>
<dbReference type="PATRIC" id="fig|122586.8.peg.330"/>
<dbReference type="HOGENOM" id="CLU_087936_0_0_4"/>
<dbReference type="InParanoid" id="Q9K1A2"/>
<dbReference type="OrthoDB" id="5293449at2"/>
<dbReference type="Proteomes" id="UP000000425">
    <property type="component" value="Chromosome"/>
</dbReference>
<dbReference type="GO" id="GO:0005737">
    <property type="term" value="C:cytoplasm"/>
    <property type="evidence" value="ECO:0007669"/>
    <property type="project" value="UniProtKB-SubCell"/>
</dbReference>
<dbReference type="GO" id="GO:0009379">
    <property type="term" value="C:Holliday junction helicase complex"/>
    <property type="evidence" value="ECO:0007669"/>
    <property type="project" value="InterPro"/>
</dbReference>
<dbReference type="GO" id="GO:0048476">
    <property type="term" value="C:Holliday junction resolvase complex"/>
    <property type="evidence" value="ECO:0007669"/>
    <property type="project" value="UniProtKB-UniRule"/>
</dbReference>
<dbReference type="GO" id="GO:0005524">
    <property type="term" value="F:ATP binding"/>
    <property type="evidence" value="ECO:0007669"/>
    <property type="project" value="InterPro"/>
</dbReference>
<dbReference type="GO" id="GO:0000400">
    <property type="term" value="F:four-way junction DNA binding"/>
    <property type="evidence" value="ECO:0007669"/>
    <property type="project" value="UniProtKB-UniRule"/>
</dbReference>
<dbReference type="GO" id="GO:0009378">
    <property type="term" value="F:four-way junction helicase activity"/>
    <property type="evidence" value="ECO:0000318"/>
    <property type="project" value="GO_Central"/>
</dbReference>
<dbReference type="GO" id="GO:0006310">
    <property type="term" value="P:DNA recombination"/>
    <property type="evidence" value="ECO:0007669"/>
    <property type="project" value="UniProtKB-UniRule"/>
</dbReference>
<dbReference type="GO" id="GO:0006281">
    <property type="term" value="P:DNA repair"/>
    <property type="evidence" value="ECO:0007669"/>
    <property type="project" value="UniProtKB-UniRule"/>
</dbReference>
<dbReference type="GO" id="GO:0009432">
    <property type="term" value="P:SOS response"/>
    <property type="evidence" value="ECO:0000318"/>
    <property type="project" value="GO_Central"/>
</dbReference>
<dbReference type="CDD" id="cd14332">
    <property type="entry name" value="UBA_RuvA_C"/>
    <property type="match status" value="1"/>
</dbReference>
<dbReference type="Gene3D" id="1.10.150.20">
    <property type="entry name" value="5' to 3' exonuclease, C-terminal subdomain"/>
    <property type="match status" value="1"/>
</dbReference>
<dbReference type="Gene3D" id="1.10.8.10">
    <property type="entry name" value="DNA helicase RuvA subunit, C-terminal domain"/>
    <property type="match status" value="1"/>
</dbReference>
<dbReference type="Gene3D" id="2.40.50.140">
    <property type="entry name" value="Nucleic acid-binding proteins"/>
    <property type="match status" value="1"/>
</dbReference>
<dbReference type="HAMAP" id="MF_00031">
    <property type="entry name" value="DNA_HJ_migration_RuvA"/>
    <property type="match status" value="1"/>
</dbReference>
<dbReference type="InterPro" id="IPR013849">
    <property type="entry name" value="DNA_helicase_Holl-junc_RuvA_I"/>
</dbReference>
<dbReference type="InterPro" id="IPR003583">
    <property type="entry name" value="Hlx-hairpin-Hlx_DNA-bd_motif"/>
</dbReference>
<dbReference type="InterPro" id="IPR012340">
    <property type="entry name" value="NA-bd_OB-fold"/>
</dbReference>
<dbReference type="InterPro" id="IPR000085">
    <property type="entry name" value="RuvA"/>
</dbReference>
<dbReference type="InterPro" id="IPR010994">
    <property type="entry name" value="RuvA_2-like"/>
</dbReference>
<dbReference type="InterPro" id="IPR011114">
    <property type="entry name" value="RuvA_C"/>
</dbReference>
<dbReference type="InterPro" id="IPR036267">
    <property type="entry name" value="RuvA_C_sf"/>
</dbReference>
<dbReference type="NCBIfam" id="TIGR00084">
    <property type="entry name" value="ruvA"/>
    <property type="match status" value="1"/>
</dbReference>
<dbReference type="Pfam" id="PF14520">
    <property type="entry name" value="HHH_5"/>
    <property type="match status" value="1"/>
</dbReference>
<dbReference type="Pfam" id="PF07499">
    <property type="entry name" value="RuvA_C"/>
    <property type="match status" value="1"/>
</dbReference>
<dbReference type="Pfam" id="PF01330">
    <property type="entry name" value="RuvA_N"/>
    <property type="match status" value="1"/>
</dbReference>
<dbReference type="SMART" id="SM00278">
    <property type="entry name" value="HhH1"/>
    <property type="match status" value="2"/>
</dbReference>
<dbReference type="SUPFAM" id="SSF46929">
    <property type="entry name" value="DNA helicase RuvA subunit, C-terminal domain"/>
    <property type="match status" value="1"/>
</dbReference>
<dbReference type="SUPFAM" id="SSF50249">
    <property type="entry name" value="Nucleic acid-binding proteins"/>
    <property type="match status" value="1"/>
</dbReference>
<dbReference type="SUPFAM" id="SSF47781">
    <property type="entry name" value="RuvA domain 2-like"/>
    <property type="match status" value="1"/>
</dbReference>
<keyword id="KW-0963">Cytoplasm</keyword>
<keyword id="KW-0227">DNA damage</keyword>
<keyword id="KW-0233">DNA recombination</keyword>
<keyword id="KW-0234">DNA repair</keyword>
<keyword id="KW-0238">DNA-binding</keyword>
<keyword id="KW-1185">Reference proteome</keyword>
<comment type="function">
    <text evidence="1">The RuvA-RuvB-RuvC complex processes Holliday junction (HJ) DNA during genetic recombination and DNA repair, while the RuvA-RuvB complex plays an important role in the rescue of blocked DNA replication forks via replication fork reversal (RFR). RuvA specifically binds to HJ cruciform DNA, conferring on it an open structure. The RuvB hexamer acts as an ATP-dependent pump, pulling dsDNA into and through the RuvAB complex. HJ branch migration allows RuvC to scan DNA until it finds its consensus sequence, where it cleaves and resolves the cruciform DNA.</text>
</comment>
<comment type="subunit">
    <text evidence="1">Homotetramer. Forms an RuvA(8)-RuvB(12)-Holliday junction (HJ) complex. HJ DNA is sandwiched between 2 RuvA tetramers; dsDNA enters through RuvA and exits via RuvB. An RuvB hexamer assembles on each DNA strand where it exits the tetramer. Each RuvB hexamer is contacted by two RuvA subunits (via domain III) on 2 adjacent RuvB subunits; this complex drives branch migration. In the full resolvosome a probable DNA-RuvA(4)-RuvB(12)-RuvC(2) complex forms which resolves the HJ.</text>
</comment>
<comment type="subcellular location">
    <subcellularLocation>
        <location evidence="1">Cytoplasm</location>
    </subcellularLocation>
</comment>
<comment type="domain">
    <text evidence="1">Has three domains with a flexible linker between the domains II and III and assumes an 'L' shape. Domain III is highly mobile and contacts RuvB.</text>
</comment>
<comment type="similarity">
    <text evidence="1">Belongs to the RuvA family.</text>
</comment>
<reference key="1">
    <citation type="journal article" date="2000" name="Science">
        <title>Complete genome sequence of Neisseria meningitidis serogroup B strain MC58.</title>
        <authorList>
            <person name="Tettelin H."/>
            <person name="Saunders N.J."/>
            <person name="Heidelberg J.F."/>
            <person name="Jeffries A.C."/>
            <person name="Nelson K.E."/>
            <person name="Eisen J.A."/>
            <person name="Ketchum K.A."/>
            <person name="Hood D.W."/>
            <person name="Peden J.F."/>
            <person name="Dodson R.J."/>
            <person name="Nelson W.C."/>
            <person name="Gwinn M.L."/>
            <person name="DeBoy R.T."/>
            <person name="Peterson J.D."/>
            <person name="Hickey E.K."/>
            <person name="Haft D.H."/>
            <person name="Salzberg S.L."/>
            <person name="White O."/>
            <person name="Fleischmann R.D."/>
            <person name="Dougherty B.A."/>
            <person name="Mason T.M."/>
            <person name="Ciecko A."/>
            <person name="Parksey D.S."/>
            <person name="Blair E."/>
            <person name="Cittone H."/>
            <person name="Clark E.B."/>
            <person name="Cotton M.D."/>
            <person name="Utterback T.R."/>
            <person name="Khouri H.M."/>
            <person name="Qin H."/>
            <person name="Vamathevan J.J."/>
            <person name="Gill J."/>
            <person name="Scarlato V."/>
            <person name="Masignani V."/>
            <person name="Pizza M."/>
            <person name="Grandi G."/>
            <person name="Sun L."/>
            <person name="Smith H.O."/>
            <person name="Fraser C.M."/>
            <person name="Moxon E.R."/>
            <person name="Rappuoli R."/>
            <person name="Venter J.C."/>
        </authorList>
    </citation>
    <scope>NUCLEOTIDE SEQUENCE [LARGE SCALE GENOMIC DNA]</scope>
    <source>
        <strain>ATCC BAA-335 / MC58</strain>
    </source>
</reference>
<feature type="chain" id="PRO_0000094656" description="Holliday junction branch migration complex subunit RuvA">
    <location>
        <begin position="1"/>
        <end position="194"/>
    </location>
</feature>
<feature type="region of interest" description="Domain I" evidence="1">
    <location>
        <begin position="1"/>
        <end position="64"/>
    </location>
</feature>
<feature type="region of interest" description="Domain II" evidence="1">
    <location>
        <begin position="65"/>
        <end position="143"/>
    </location>
</feature>
<feature type="region of interest" description="Flexible linker" evidence="1">
    <location>
        <begin position="144"/>
        <end position="147"/>
    </location>
</feature>
<feature type="region of interest" description="Domain III" evidence="1">
    <location>
        <begin position="147"/>
        <end position="194"/>
    </location>
</feature>
<proteinExistence type="inferred from homology"/>
<evidence type="ECO:0000255" key="1">
    <source>
        <dbReference type="HAMAP-Rule" id="MF_00031"/>
    </source>
</evidence>
<gene>
    <name evidence="1" type="primary">ruvA</name>
    <name type="ordered locus">NMB0265</name>
</gene>
<protein>
    <recommendedName>
        <fullName evidence="1">Holliday junction branch migration complex subunit RuvA</fullName>
    </recommendedName>
</protein>
<name>RUVA_NEIMB</name>
<sequence>MISRLTGKLVEKNPPQIVIDVNGVGYEADVSMQTFYNLPPVGESVQLFTQLIIREDAHLLFGFATAEERKTFRQLIKVGGIGAKTALGILSAMTADELARAVAEEDVKRLSSAPGIGKKTAERMVLELRGKLVAHTVTDGLFAAAPAADETEDIVSTLLALGYSEREAKAAVKGVPEGTDVGEGVRLALKNLLK</sequence>